<sequence length="318" mass="36839">MLNSFDAAYHSLCEEVLEIGNTRNDRTNTGTISKFGHQLRFDLSKGFPLLTTKKVSFKLVATELLWFIKGDTNIQYLLKYNNNIWNEWAFENYIKSDEYKGPDMTDFGHRALSDPEFNEQYKEQMKQFKQRILEDDTFAKQFGDLGNVYGKQWRDWVDKDGNHFDQLKTVIEQIKHNPDSRRHIVSAWNPTEIDTMALPPCHTMFQFYVQDGKLSCQLYQRSADIFLGVPFNIASYALLTHLIAKECGLEVGEFVHTFGDAHIYSNHIDAIQTQLARESFNPPTLKINSDKSIFDINYEDLEIVDYESHPAIKAPIAV</sequence>
<accession>A6QGX8</accession>
<proteinExistence type="inferred from homology"/>
<protein>
    <recommendedName>
        <fullName evidence="1">Thymidylate synthase</fullName>
        <shortName evidence="1">TS</shortName>
        <shortName evidence="1">TSase</shortName>
        <ecNumber evidence="1">2.1.1.45</ecNumber>
    </recommendedName>
</protein>
<organism>
    <name type="scientific">Staphylococcus aureus (strain Newman)</name>
    <dbReference type="NCBI Taxonomy" id="426430"/>
    <lineage>
        <taxon>Bacteria</taxon>
        <taxon>Bacillati</taxon>
        <taxon>Bacillota</taxon>
        <taxon>Bacilli</taxon>
        <taxon>Bacillales</taxon>
        <taxon>Staphylococcaceae</taxon>
        <taxon>Staphylococcus</taxon>
    </lineage>
</organism>
<evidence type="ECO:0000255" key="1">
    <source>
        <dbReference type="HAMAP-Rule" id="MF_00008"/>
    </source>
</evidence>
<reference key="1">
    <citation type="journal article" date="2008" name="J. Bacteriol.">
        <title>Genome sequence of Staphylococcus aureus strain Newman and comparative analysis of staphylococcal genomes: polymorphism and evolution of two major pathogenicity islands.</title>
        <authorList>
            <person name="Baba T."/>
            <person name="Bae T."/>
            <person name="Schneewind O."/>
            <person name="Takeuchi F."/>
            <person name="Hiramatsu K."/>
        </authorList>
    </citation>
    <scope>NUCLEOTIDE SEQUENCE [LARGE SCALE GENOMIC DNA]</scope>
    <source>
        <strain>Newman</strain>
    </source>
</reference>
<keyword id="KW-0963">Cytoplasm</keyword>
<keyword id="KW-0489">Methyltransferase</keyword>
<keyword id="KW-0545">Nucleotide biosynthesis</keyword>
<keyword id="KW-0808">Transferase</keyword>
<name>TYSY_STAAE</name>
<gene>
    <name evidence="1" type="primary">thyA</name>
    <name type="ordered locus">NWMN_1338</name>
</gene>
<feature type="chain" id="PRO_1000070927" description="Thymidylate synthase">
    <location>
        <begin position="1"/>
        <end position="318"/>
    </location>
</feature>
<feature type="active site" description="Nucleophile" evidence="1">
    <location>
        <position position="201"/>
    </location>
</feature>
<feature type="binding site" description="in other chain" evidence="1">
    <location>
        <position position="26"/>
    </location>
    <ligand>
        <name>dUMP</name>
        <dbReference type="ChEBI" id="CHEBI:246422"/>
        <note>ligand shared between dimeric partners</note>
    </ligand>
</feature>
<feature type="binding site" evidence="1">
    <location>
        <begin position="181"/>
        <end position="182"/>
    </location>
    <ligand>
        <name>dUMP</name>
        <dbReference type="ChEBI" id="CHEBI:246422"/>
        <note>ligand shared between dimeric partners</note>
    </ligand>
</feature>
<feature type="binding site" description="in other chain" evidence="1">
    <location>
        <begin position="221"/>
        <end position="224"/>
    </location>
    <ligand>
        <name>dUMP</name>
        <dbReference type="ChEBI" id="CHEBI:246422"/>
        <note>ligand shared between dimeric partners</note>
    </ligand>
</feature>
<feature type="binding site" evidence="1">
    <location>
        <position position="224"/>
    </location>
    <ligand>
        <name>(6R)-5,10-methylene-5,6,7,8-tetrahydrofolate</name>
        <dbReference type="ChEBI" id="CHEBI:15636"/>
    </ligand>
</feature>
<feature type="binding site" description="in other chain" evidence="1">
    <location>
        <position position="232"/>
    </location>
    <ligand>
        <name>dUMP</name>
        <dbReference type="ChEBI" id="CHEBI:246422"/>
        <note>ligand shared between dimeric partners</note>
    </ligand>
</feature>
<feature type="binding site" description="in other chain" evidence="1">
    <location>
        <begin position="262"/>
        <end position="264"/>
    </location>
    <ligand>
        <name>dUMP</name>
        <dbReference type="ChEBI" id="CHEBI:246422"/>
        <note>ligand shared between dimeric partners</note>
    </ligand>
</feature>
<feature type="binding site" evidence="1">
    <location>
        <position position="317"/>
    </location>
    <ligand>
        <name>(6R)-5,10-methylene-5,6,7,8-tetrahydrofolate</name>
        <dbReference type="ChEBI" id="CHEBI:15636"/>
    </ligand>
</feature>
<comment type="function">
    <text evidence="1">Catalyzes the reductive methylation of 2'-deoxyuridine-5'-monophosphate (dUMP) to 2'-deoxythymidine-5'-monophosphate (dTMP) while utilizing 5,10-methylenetetrahydrofolate (mTHF) as the methyl donor and reductant in the reaction, yielding dihydrofolate (DHF) as a by-product. This enzymatic reaction provides an intracellular de novo source of dTMP, an essential precursor for DNA biosynthesis.</text>
</comment>
<comment type="catalytic activity">
    <reaction evidence="1">
        <text>dUMP + (6R)-5,10-methylene-5,6,7,8-tetrahydrofolate = 7,8-dihydrofolate + dTMP</text>
        <dbReference type="Rhea" id="RHEA:12104"/>
        <dbReference type="ChEBI" id="CHEBI:15636"/>
        <dbReference type="ChEBI" id="CHEBI:57451"/>
        <dbReference type="ChEBI" id="CHEBI:63528"/>
        <dbReference type="ChEBI" id="CHEBI:246422"/>
        <dbReference type="EC" id="2.1.1.45"/>
    </reaction>
</comment>
<comment type="pathway">
    <text evidence="1">Pyrimidine metabolism; dTTP biosynthesis.</text>
</comment>
<comment type="subunit">
    <text evidence="1">Homodimer.</text>
</comment>
<comment type="subcellular location">
    <subcellularLocation>
        <location evidence="1">Cytoplasm</location>
    </subcellularLocation>
</comment>
<comment type="similarity">
    <text evidence="1">Belongs to the thymidylate synthase family. Bacterial-type ThyA subfamily.</text>
</comment>
<dbReference type="EC" id="2.1.1.45" evidence="1"/>
<dbReference type="EMBL" id="AP009351">
    <property type="protein sequence ID" value="BAF67610.1"/>
    <property type="molecule type" value="Genomic_DNA"/>
</dbReference>
<dbReference type="RefSeq" id="WP_000934885.1">
    <property type="nucleotide sequence ID" value="NZ_JBBIAE010000001.1"/>
</dbReference>
<dbReference type="SMR" id="A6QGX8"/>
<dbReference type="KEGG" id="sae:NWMN_1338"/>
<dbReference type="HOGENOM" id="CLU_021669_0_2_9"/>
<dbReference type="UniPathway" id="UPA00575"/>
<dbReference type="Proteomes" id="UP000006386">
    <property type="component" value="Chromosome"/>
</dbReference>
<dbReference type="GO" id="GO:0005829">
    <property type="term" value="C:cytosol"/>
    <property type="evidence" value="ECO:0007669"/>
    <property type="project" value="TreeGrafter"/>
</dbReference>
<dbReference type="GO" id="GO:0004799">
    <property type="term" value="F:thymidylate synthase activity"/>
    <property type="evidence" value="ECO:0007669"/>
    <property type="project" value="UniProtKB-UniRule"/>
</dbReference>
<dbReference type="GO" id="GO:0006231">
    <property type="term" value="P:dTMP biosynthetic process"/>
    <property type="evidence" value="ECO:0007669"/>
    <property type="project" value="UniProtKB-UniRule"/>
</dbReference>
<dbReference type="GO" id="GO:0006235">
    <property type="term" value="P:dTTP biosynthetic process"/>
    <property type="evidence" value="ECO:0007669"/>
    <property type="project" value="UniProtKB-UniRule"/>
</dbReference>
<dbReference type="GO" id="GO:0032259">
    <property type="term" value="P:methylation"/>
    <property type="evidence" value="ECO:0007669"/>
    <property type="project" value="UniProtKB-KW"/>
</dbReference>
<dbReference type="CDD" id="cd00351">
    <property type="entry name" value="TS_Pyrimidine_HMase"/>
    <property type="match status" value="1"/>
</dbReference>
<dbReference type="Gene3D" id="3.30.572.10">
    <property type="entry name" value="Thymidylate synthase/dCMP hydroxymethylase domain"/>
    <property type="match status" value="1"/>
</dbReference>
<dbReference type="HAMAP" id="MF_00008">
    <property type="entry name" value="Thymidy_synth_bact"/>
    <property type="match status" value="1"/>
</dbReference>
<dbReference type="InterPro" id="IPR045097">
    <property type="entry name" value="Thymidate_synth/dCMP_Mease"/>
</dbReference>
<dbReference type="InterPro" id="IPR023451">
    <property type="entry name" value="Thymidate_synth/dCMP_Mease_dom"/>
</dbReference>
<dbReference type="InterPro" id="IPR036926">
    <property type="entry name" value="Thymidate_synth/dCMP_Mease_sf"/>
</dbReference>
<dbReference type="InterPro" id="IPR000398">
    <property type="entry name" value="Thymidylate_synthase"/>
</dbReference>
<dbReference type="InterPro" id="IPR020940">
    <property type="entry name" value="Thymidylate_synthase_AS"/>
</dbReference>
<dbReference type="NCBIfam" id="NF002496">
    <property type="entry name" value="PRK01827.1-2"/>
    <property type="match status" value="1"/>
</dbReference>
<dbReference type="NCBIfam" id="TIGR03284">
    <property type="entry name" value="thym_sym"/>
    <property type="match status" value="1"/>
</dbReference>
<dbReference type="PANTHER" id="PTHR11548:SF9">
    <property type="entry name" value="THYMIDYLATE SYNTHASE"/>
    <property type="match status" value="1"/>
</dbReference>
<dbReference type="PANTHER" id="PTHR11548">
    <property type="entry name" value="THYMIDYLATE SYNTHASE 1"/>
    <property type="match status" value="1"/>
</dbReference>
<dbReference type="Pfam" id="PF00303">
    <property type="entry name" value="Thymidylat_synt"/>
    <property type="match status" value="1"/>
</dbReference>
<dbReference type="PRINTS" id="PR00108">
    <property type="entry name" value="THYMDSNTHASE"/>
</dbReference>
<dbReference type="SUPFAM" id="SSF55831">
    <property type="entry name" value="Thymidylate synthase/dCMP hydroxymethylase"/>
    <property type="match status" value="1"/>
</dbReference>
<dbReference type="PROSITE" id="PS00091">
    <property type="entry name" value="THYMIDYLATE_SYNTHASE"/>
    <property type="match status" value="1"/>
</dbReference>